<organism>
    <name type="scientific">Mycobacterium bovis (strain BCG / Pasteur 1173P2)</name>
    <dbReference type="NCBI Taxonomy" id="410289"/>
    <lineage>
        <taxon>Bacteria</taxon>
        <taxon>Bacillati</taxon>
        <taxon>Actinomycetota</taxon>
        <taxon>Actinomycetes</taxon>
        <taxon>Mycobacteriales</taxon>
        <taxon>Mycobacteriaceae</taxon>
        <taxon>Mycobacterium</taxon>
        <taxon>Mycobacterium tuberculosis complex</taxon>
    </lineage>
</organism>
<name>PSA_MYCBP</name>
<accession>A1KKF2</accession>
<feature type="chain" id="PRO_0000397148" description="Proteasome subunit alpha">
    <location>
        <begin position="1"/>
        <end position="248"/>
    </location>
</feature>
<keyword id="KW-0963">Cytoplasm</keyword>
<keyword id="KW-0647">Proteasome</keyword>
<dbReference type="EMBL" id="AM408590">
    <property type="protein sequence ID" value="CAL72114.1"/>
    <property type="molecule type" value="Genomic_DNA"/>
</dbReference>
<dbReference type="RefSeq" id="WP_003901330.1">
    <property type="nucleotide sequence ID" value="NC_008769.1"/>
</dbReference>
<dbReference type="SMR" id="A1KKF2"/>
<dbReference type="GeneID" id="45426084"/>
<dbReference type="KEGG" id="mbb:BCG_2126c"/>
<dbReference type="HOGENOM" id="CLU_071031_0_0_11"/>
<dbReference type="UniPathway" id="UPA00997"/>
<dbReference type="Proteomes" id="UP000001472">
    <property type="component" value="Chromosome"/>
</dbReference>
<dbReference type="GO" id="GO:0005737">
    <property type="term" value="C:cytoplasm"/>
    <property type="evidence" value="ECO:0007669"/>
    <property type="project" value="UniProtKB-SubCell"/>
</dbReference>
<dbReference type="GO" id="GO:0019773">
    <property type="term" value="C:proteasome core complex, alpha-subunit complex"/>
    <property type="evidence" value="ECO:0007669"/>
    <property type="project" value="UniProtKB-UniRule"/>
</dbReference>
<dbReference type="GO" id="GO:0004298">
    <property type="term" value="F:threonine-type endopeptidase activity"/>
    <property type="evidence" value="ECO:0007669"/>
    <property type="project" value="InterPro"/>
</dbReference>
<dbReference type="GO" id="GO:0019941">
    <property type="term" value="P:modification-dependent protein catabolic process"/>
    <property type="evidence" value="ECO:0007669"/>
    <property type="project" value="UniProtKB-UniRule"/>
</dbReference>
<dbReference type="GO" id="GO:0010498">
    <property type="term" value="P:proteasomal protein catabolic process"/>
    <property type="evidence" value="ECO:0007669"/>
    <property type="project" value="UniProtKB-UniRule"/>
</dbReference>
<dbReference type="CDD" id="cd01906">
    <property type="entry name" value="proteasome_protease_HslV"/>
    <property type="match status" value="1"/>
</dbReference>
<dbReference type="FunFam" id="3.60.20.10:FF:000023">
    <property type="entry name" value="Proteasome subunit alpha"/>
    <property type="match status" value="1"/>
</dbReference>
<dbReference type="Gene3D" id="3.60.20.10">
    <property type="entry name" value="Glutamine Phosphoribosylpyrophosphate, subunit 1, domain 1"/>
    <property type="match status" value="1"/>
</dbReference>
<dbReference type="HAMAP" id="MF_00289_B">
    <property type="entry name" value="Proteasome_A_B"/>
    <property type="match status" value="1"/>
</dbReference>
<dbReference type="InterPro" id="IPR029055">
    <property type="entry name" value="Ntn_hydrolases_N"/>
</dbReference>
<dbReference type="InterPro" id="IPR050115">
    <property type="entry name" value="Proteasome_alpha"/>
</dbReference>
<dbReference type="InterPro" id="IPR023332">
    <property type="entry name" value="Proteasome_alpha-type"/>
</dbReference>
<dbReference type="InterPro" id="IPR022296">
    <property type="entry name" value="Proteasome_asu_bac"/>
</dbReference>
<dbReference type="InterPro" id="IPR001353">
    <property type="entry name" value="Proteasome_sua/b"/>
</dbReference>
<dbReference type="NCBIfam" id="TIGR03691">
    <property type="entry name" value="20S_bact_alpha"/>
    <property type="match status" value="1"/>
</dbReference>
<dbReference type="PANTHER" id="PTHR11599">
    <property type="entry name" value="PROTEASOME SUBUNIT ALPHA/BETA"/>
    <property type="match status" value="1"/>
</dbReference>
<dbReference type="Pfam" id="PF00227">
    <property type="entry name" value="Proteasome"/>
    <property type="match status" value="1"/>
</dbReference>
<dbReference type="SUPFAM" id="SSF56235">
    <property type="entry name" value="N-terminal nucleophile aminohydrolases (Ntn hydrolases)"/>
    <property type="match status" value="1"/>
</dbReference>
<dbReference type="PROSITE" id="PS51475">
    <property type="entry name" value="PROTEASOME_ALPHA_2"/>
    <property type="match status" value="1"/>
</dbReference>
<protein>
    <recommendedName>
        <fullName evidence="1">Proteasome subunit alpha</fullName>
    </recommendedName>
    <alternativeName>
        <fullName evidence="1">20S proteasome alpha subunit</fullName>
    </alternativeName>
    <alternativeName>
        <fullName evidence="1">Proteasome core protein PrcA</fullName>
    </alternativeName>
</protein>
<evidence type="ECO:0000255" key="1">
    <source>
        <dbReference type="HAMAP-Rule" id="MF_00289"/>
    </source>
</evidence>
<comment type="function">
    <text evidence="1">Component of the proteasome core, a large protease complex with broad specificity involved in protein degradation.</text>
</comment>
<comment type="activity regulation">
    <text evidence="1">The formation of the proteasomal ATPase ARC-20S proteasome complex, likely via the docking of the C-termini of ARC into the intersubunit pockets in the alpha-rings, may trigger opening of the gate for substrate entry. Interconversion between the open-gate and close-gate conformations leads to a dynamic regulation of the 20S proteasome proteolysis activity.</text>
</comment>
<comment type="pathway">
    <text evidence="1">Protein degradation; proteasomal Pup-dependent pathway.</text>
</comment>
<comment type="subunit">
    <text evidence="1">The 20S proteasome core is composed of 14 alpha and 14 beta subunits that assemble into four stacked heptameric rings, resulting in a barrel-shaped structure. The two inner rings, each composed of seven catalytic beta subunits, are sandwiched by two outer rings, each composed of seven alpha subunits. The catalytic chamber with the active sites is on the inside of the barrel. Has a gated structure, the ends of the cylinder being occluded by the N-termini of the alpha-subunits. Is capped by the proteasome-associated ATPase, ARC.</text>
</comment>
<comment type="subcellular location">
    <subcellularLocation>
        <location evidence="1">Cytoplasm</location>
    </subcellularLocation>
</comment>
<comment type="similarity">
    <text evidence="1">Belongs to the peptidase T1A family.</text>
</comment>
<sequence>MSFPYFISPEQAMRERSELARKGIARAKSVVALAYAGGVLFVAENPSRSLQKISELYDRVGFAAAGKFNEFDNLRRGGIQFADTRGYAYDRRDVTGRQLANVYAQTLGTIFTEQAKPYEVELCVAEVAHYGETKPPELYRITYDGSIADEPHFVVMGGTTEPIANALKESYAENASLTDALGIAVAALRAGSADTSGGDQPTLGVASLEVAVLDANRPRRAFRRITGSALQALLVDQESPQSDGESSG</sequence>
<proteinExistence type="inferred from homology"/>
<gene>
    <name evidence="1" type="primary">prcA</name>
    <name type="ordered locus">BCG_2126c</name>
</gene>
<reference key="1">
    <citation type="journal article" date="2007" name="Proc. Natl. Acad. Sci. U.S.A.">
        <title>Genome plasticity of BCG and impact on vaccine efficacy.</title>
        <authorList>
            <person name="Brosch R."/>
            <person name="Gordon S.V."/>
            <person name="Garnier T."/>
            <person name="Eiglmeier K."/>
            <person name="Frigui W."/>
            <person name="Valenti P."/>
            <person name="Dos Santos S."/>
            <person name="Duthoy S."/>
            <person name="Lacroix C."/>
            <person name="Garcia-Pelayo C."/>
            <person name="Inwald J.K."/>
            <person name="Golby P."/>
            <person name="Garcia J.N."/>
            <person name="Hewinson R.G."/>
            <person name="Behr M.A."/>
            <person name="Quail M.A."/>
            <person name="Churcher C."/>
            <person name="Barrell B.G."/>
            <person name="Parkhill J."/>
            <person name="Cole S.T."/>
        </authorList>
    </citation>
    <scope>NUCLEOTIDE SEQUENCE [LARGE SCALE GENOMIC DNA]</scope>
    <source>
        <strain>BCG / Pasteur 1173P2</strain>
    </source>
</reference>